<sequence>MRTLTLLTALLLLALHTQAKSPQGTAEEAPDQEQLVMEDQDISISFGGDKGTALQDADVKAGVTCYCRRTRCGFRERLSGACGYRGRIYRLCCR</sequence>
<keyword id="KW-0044">Antibiotic</keyword>
<keyword id="KW-0929">Antimicrobial</keyword>
<keyword id="KW-0211">Defensin</keyword>
<keyword id="KW-0903">Direct protein sequencing</keyword>
<keyword id="KW-1015">Disulfide bond</keyword>
<keyword id="KW-0295">Fungicide</keyword>
<keyword id="KW-0597">Phosphoprotein</keyword>
<keyword id="KW-1185">Reference proteome</keyword>
<keyword id="KW-0964">Secreted</keyword>
<keyword id="KW-0732">Signal</keyword>
<proteinExistence type="evidence at protein level"/>
<dbReference type="EMBL" id="U16686">
    <property type="protein sequence ID" value="AAA91974.1"/>
    <property type="molecule type" value="mRNA"/>
</dbReference>
<dbReference type="PIR" id="D61014">
    <property type="entry name" value="D61014"/>
</dbReference>
<dbReference type="SMR" id="Q62716"/>
<dbReference type="FunCoup" id="Q62716">
    <property type="interactions" value="11"/>
</dbReference>
<dbReference type="AGR" id="RGD:727951"/>
<dbReference type="InParanoid" id="Q62716"/>
<dbReference type="Proteomes" id="UP000002494">
    <property type="component" value="Unplaced"/>
</dbReference>
<dbReference type="GO" id="GO:0005615">
    <property type="term" value="C:extracellular space"/>
    <property type="evidence" value="ECO:0000318"/>
    <property type="project" value="GO_Central"/>
</dbReference>
<dbReference type="GO" id="GO:0019731">
    <property type="term" value="P:antibacterial humoral response"/>
    <property type="evidence" value="ECO:0000318"/>
    <property type="project" value="GO_Central"/>
</dbReference>
<dbReference type="GO" id="GO:0061844">
    <property type="term" value="P:antimicrobial humoral immune response mediated by antimicrobial peptide"/>
    <property type="evidence" value="ECO:0000318"/>
    <property type="project" value="GO_Central"/>
</dbReference>
<dbReference type="GO" id="GO:0071222">
    <property type="term" value="P:cellular response to lipopolysaccharide"/>
    <property type="evidence" value="ECO:0000318"/>
    <property type="project" value="GO_Central"/>
</dbReference>
<dbReference type="GO" id="GO:0050832">
    <property type="term" value="P:defense response to fungus"/>
    <property type="evidence" value="ECO:0007669"/>
    <property type="project" value="UniProtKB-KW"/>
</dbReference>
<dbReference type="GO" id="GO:0050829">
    <property type="term" value="P:defense response to Gram-negative bacterium"/>
    <property type="evidence" value="ECO:0000318"/>
    <property type="project" value="GO_Central"/>
</dbReference>
<dbReference type="GO" id="GO:0050830">
    <property type="term" value="P:defense response to Gram-positive bacterium"/>
    <property type="evidence" value="ECO:0000318"/>
    <property type="project" value="GO_Central"/>
</dbReference>
<dbReference type="GO" id="GO:0051673">
    <property type="term" value="P:disruption of plasma membrane integrity in another organism"/>
    <property type="evidence" value="ECO:0000318"/>
    <property type="project" value="GO_Central"/>
</dbReference>
<dbReference type="GO" id="GO:0002227">
    <property type="term" value="P:innate immune response in mucosa"/>
    <property type="evidence" value="ECO:0000318"/>
    <property type="project" value="GO_Central"/>
</dbReference>
<dbReference type="GO" id="GO:0031640">
    <property type="term" value="P:killing of cells of another organism"/>
    <property type="evidence" value="ECO:0007669"/>
    <property type="project" value="UniProtKB-KW"/>
</dbReference>
<dbReference type="InterPro" id="IPR016327">
    <property type="entry name" value="Alpha-defensin"/>
</dbReference>
<dbReference type="InterPro" id="IPR006081">
    <property type="entry name" value="Alpha-defensin_C"/>
</dbReference>
<dbReference type="InterPro" id="IPR002366">
    <property type="entry name" value="Alpha-defensin_N"/>
</dbReference>
<dbReference type="InterPro" id="IPR006080">
    <property type="entry name" value="Beta/alpha-defensin_C"/>
</dbReference>
<dbReference type="PANTHER" id="PTHR11876">
    <property type="entry name" value="ALPHA-DEFENSIN 1"/>
    <property type="match status" value="1"/>
</dbReference>
<dbReference type="PANTHER" id="PTHR11876:SF31">
    <property type="entry name" value="DEFENSIN ALPHA 10-RELATED"/>
    <property type="match status" value="1"/>
</dbReference>
<dbReference type="Pfam" id="PF00323">
    <property type="entry name" value="Defensin_1"/>
    <property type="match status" value="1"/>
</dbReference>
<dbReference type="Pfam" id="PF00879">
    <property type="entry name" value="Defensin_propep"/>
    <property type="match status" value="1"/>
</dbReference>
<dbReference type="PIRSF" id="PIRSF001875">
    <property type="entry name" value="Alpha-defensin"/>
    <property type="match status" value="1"/>
</dbReference>
<dbReference type="SMART" id="SM01418">
    <property type="entry name" value="Defensin_propep"/>
    <property type="match status" value="1"/>
</dbReference>
<dbReference type="SMART" id="SM00048">
    <property type="entry name" value="DEFSN"/>
    <property type="match status" value="1"/>
</dbReference>
<dbReference type="SUPFAM" id="SSF57392">
    <property type="entry name" value="Defensin-like"/>
    <property type="match status" value="1"/>
</dbReference>
<dbReference type="PROSITE" id="PS00269">
    <property type="entry name" value="DEFENSIN"/>
    <property type="match status" value="1"/>
</dbReference>
<feature type="signal peptide" evidence="3">
    <location>
        <begin position="1"/>
        <end position="19"/>
    </location>
</feature>
<feature type="propeptide" id="PRO_0000006859" evidence="3">
    <location>
        <begin position="20"/>
        <end position="62"/>
    </location>
</feature>
<feature type="peptide" id="PRO_0000006860" description="Neutrophil antibiotic peptide NP-1">
    <location>
        <begin position="63"/>
        <end position="94"/>
    </location>
</feature>
<feature type="modified residue" description="Phosphotyrosine" evidence="2">
    <location>
        <position position="84"/>
    </location>
</feature>
<feature type="disulfide bond" evidence="1">
    <location>
        <begin position="65"/>
        <end position="93"/>
    </location>
</feature>
<feature type="disulfide bond" evidence="1">
    <location>
        <begin position="67"/>
        <end position="82"/>
    </location>
</feature>
<feature type="disulfide bond" evidence="1">
    <location>
        <begin position="72"/>
        <end position="92"/>
    </location>
</feature>
<evidence type="ECO:0000250" key="1"/>
<evidence type="ECO:0000250" key="2">
    <source>
        <dbReference type="UniProtKB" id="P59665"/>
    </source>
</evidence>
<evidence type="ECO:0000255" key="3"/>
<evidence type="ECO:0000305" key="4"/>
<organism>
    <name type="scientific">Rattus norvegicus</name>
    <name type="common">Rat</name>
    <dbReference type="NCBI Taxonomy" id="10116"/>
    <lineage>
        <taxon>Eukaryota</taxon>
        <taxon>Metazoa</taxon>
        <taxon>Chordata</taxon>
        <taxon>Craniata</taxon>
        <taxon>Vertebrata</taxon>
        <taxon>Euteleostomi</taxon>
        <taxon>Mammalia</taxon>
        <taxon>Eutheria</taxon>
        <taxon>Euarchontoglires</taxon>
        <taxon>Glires</taxon>
        <taxon>Rodentia</taxon>
        <taxon>Myomorpha</taxon>
        <taxon>Muroidea</taxon>
        <taxon>Muridae</taxon>
        <taxon>Murinae</taxon>
        <taxon>Rattus</taxon>
    </lineage>
</organism>
<comment type="function">
    <text>Active in vitro against S.aureus, fungi, Gram-positive and Gram-negative bacteria and to a lesser extent against an enveloped virus.</text>
</comment>
<comment type="subcellular location">
    <subcellularLocation>
        <location>Secreted</location>
    </subcellularLocation>
</comment>
<comment type="tissue specificity">
    <text>Highest expression in bone marrow and to a much lesser extent in small intestine.</text>
</comment>
<comment type="similarity">
    <text evidence="4">Belongs to the alpha-defensin family.</text>
</comment>
<reference key="1">
    <citation type="journal article" date="1995" name="J. Immunol.">
        <title>Rat neutrophil defensins. Precursor structures and expression during neutrophilic myelopoiesis.</title>
        <authorList>
            <person name="Yount N.Y."/>
            <person name="Wang M.-S.C."/>
            <person name="Yuan J."/>
            <person name="Banaiee N."/>
            <person name="Ouellette A.J."/>
            <person name="Selsted M.E."/>
        </authorList>
    </citation>
    <scope>NUCLEOTIDE SEQUENCE [MRNA]</scope>
    <scope>PROTEIN SEQUENCE OF 63-68 AND 86-91</scope>
    <source>
        <strain>Sprague-Dawley</strain>
        <tissue>Bone marrow</tissue>
    </source>
</reference>
<reference key="2">
    <citation type="journal article" date="1989" name="Infect. Immun.">
        <title>Purification and antimicrobial properties of three defensins from rat neutrophils.</title>
        <authorList>
            <person name="Eisenhauer P.B."/>
            <person name="Harwig S.S.S.L."/>
            <person name="Szklarek D."/>
            <person name="Ganz T."/>
            <person name="Selsted M.E."/>
            <person name="Lehrer R.I."/>
        </authorList>
    </citation>
    <scope>PROTEIN SEQUENCE OF 63-94</scope>
    <source>
        <strain>Sprague-Dawley</strain>
        <tissue>Peritoneal neutrophil</tissue>
    </source>
</reference>
<name>DEF1_RAT</name>
<protein>
    <recommendedName>
        <fullName>Neutrophil antibiotic peptide NP-1</fullName>
        <shortName>RatNP-1</shortName>
    </recommendedName>
    <alternativeName>
        <fullName>Neutrophil defensin 1</fullName>
    </alternativeName>
</protein>
<accession>Q62716</accession>